<name>RSMH_HAEIE</name>
<accession>A5UCX6</accession>
<reference key="1">
    <citation type="journal article" date="2007" name="Genome Biol.">
        <title>Characterization and modeling of the Haemophilus influenzae core and supragenomes based on the complete genomic sequences of Rd and 12 clinical nontypeable strains.</title>
        <authorList>
            <person name="Hogg J.S."/>
            <person name="Hu F.Z."/>
            <person name="Janto B."/>
            <person name="Boissy R."/>
            <person name="Hayes J."/>
            <person name="Keefe R."/>
            <person name="Post J.C."/>
            <person name="Ehrlich G.D."/>
        </authorList>
    </citation>
    <scope>NUCLEOTIDE SEQUENCE [LARGE SCALE GENOMIC DNA]</scope>
    <source>
        <strain>PittEE</strain>
    </source>
</reference>
<keyword id="KW-0963">Cytoplasm</keyword>
<keyword id="KW-0489">Methyltransferase</keyword>
<keyword id="KW-0698">rRNA processing</keyword>
<keyword id="KW-0949">S-adenosyl-L-methionine</keyword>
<keyword id="KW-0808">Transferase</keyword>
<proteinExistence type="inferred from homology"/>
<gene>
    <name evidence="1" type="primary">rsmH</name>
    <name type="synonym">mraW</name>
    <name type="ordered locus">CGSHiEE_06400</name>
</gene>
<feature type="chain" id="PRO_0000386917" description="Ribosomal RNA small subunit methyltransferase H">
    <location>
        <begin position="1"/>
        <end position="321"/>
    </location>
</feature>
<feature type="binding site" evidence="1">
    <location>
        <begin position="40"/>
        <end position="42"/>
    </location>
    <ligand>
        <name>S-adenosyl-L-methionine</name>
        <dbReference type="ChEBI" id="CHEBI:59789"/>
    </ligand>
</feature>
<feature type="binding site" evidence="1">
    <location>
        <position position="60"/>
    </location>
    <ligand>
        <name>S-adenosyl-L-methionine</name>
        <dbReference type="ChEBI" id="CHEBI:59789"/>
    </ligand>
</feature>
<feature type="binding site" evidence="1">
    <location>
        <position position="84"/>
    </location>
    <ligand>
        <name>S-adenosyl-L-methionine</name>
        <dbReference type="ChEBI" id="CHEBI:59789"/>
    </ligand>
</feature>
<feature type="binding site" evidence="1">
    <location>
        <position position="106"/>
    </location>
    <ligand>
        <name>S-adenosyl-L-methionine</name>
        <dbReference type="ChEBI" id="CHEBI:59789"/>
    </ligand>
</feature>
<feature type="binding site" evidence="1">
    <location>
        <position position="113"/>
    </location>
    <ligand>
        <name>S-adenosyl-L-methionine</name>
        <dbReference type="ChEBI" id="CHEBI:59789"/>
    </ligand>
</feature>
<comment type="function">
    <text evidence="1">Specifically methylates the N4 position of cytidine in position 1402 (C1402) of 16S rRNA.</text>
</comment>
<comment type="catalytic activity">
    <reaction evidence="1">
        <text>cytidine(1402) in 16S rRNA + S-adenosyl-L-methionine = N(4)-methylcytidine(1402) in 16S rRNA + S-adenosyl-L-homocysteine + H(+)</text>
        <dbReference type="Rhea" id="RHEA:42928"/>
        <dbReference type="Rhea" id="RHEA-COMP:10286"/>
        <dbReference type="Rhea" id="RHEA-COMP:10287"/>
        <dbReference type="ChEBI" id="CHEBI:15378"/>
        <dbReference type="ChEBI" id="CHEBI:57856"/>
        <dbReference type="ChEBI" id="CHEBI:59789"/>
        <dbReference type="ChEBI" id="CHEBI:74506"/>
        <dbReference type="ChEBI" id="CHEBI:82748"/>
        <dbReference type="EC" id="2.1.1.199"/>
    </reaction>
</comment>
<comment type="subcellular location">
    <subcellularLocation>
        <location evidence="1">Cytoplasm</location>
    </subcellularLocation>
</comment>
<comment type="similarity">
    <text evidence="1">Belongs to the methyltransferase superfamily. RsmH family.</text>
</comment>
<protein>
    <recommendedName>
        <fullName evidence="1">Ribosomal RNA small subunit methyltransferase H</fullName>
        <ecNumber evidence="1">2.1.1.199</ecNumber>
    </recommendedName>
    <alternativeName>
        <fullName evidence="1">16S rRNA m(4)C1402 methyltransferase</fullName>
    </alternativeName>
    <alternativeName>
        <fullName evidence="1">rRNA (cytosine-N(4)-)-methyltransferase RsmH</fullName>
    </alternativeName>
</protein>
<sequence length="321" mass="36082">MNSENSFSSSEHITVLLHEAVNGLALKENGIYIDGTFGRGGHSRFILSQLSSNGRLIAVDRDPRAIAEAHKIQDLRFQIEHNSFSHIPEICDKLNLVGKIDGILLDLGVSSPQLDEAERGFSFMKDGPLDMRMDTTQGLSAEEWLKQVSIEDLTWVLKTFGEERFAKRIATAIVDFNKSAVKNSTEFLSRTSQLAELISQAVPFKDKHKHPATRSFQAIRIFINSELDELESLLNSALDMLAPEGRLSIISFHSLEDRMVKHFMKKQSKGEDIPKGLPLREDQIQRNQKLRIIGKAIQPSDAEIQANPRSRSAILRVAERI</sequence>
<dbReference type="EC" id="2.1.1.199" evidence="1"/>
<dbReference type="EMBL" id="CP000671">
    <property type="protein sequence ID" value="ABQ98627.1"/>
    <property type="molecule type" value="Genomic_DNA"/>
</dbReference>
<dbReference type="SMR" id="A5UCX6"/>
<dbReference type="KEGG" id="hip:CGSHiEE_06400"/>
<dbReference type="HOGENOM" id="CLU_038422_2_0_6"/>
<dbReference type="GO" id="GO:0005737">
    <property type="term" value="C:cytoplasm"/>
    <property type="evidence" value="ECO:0007669"/>
    <property type="project" value="UniProtKB-SubCell"/>
</dbReference>
<dbReference type="GO" id="GO:0071424">
    <property type="term" value="F:rRNA (cytosine-N4-)-methyltransferase activity"/>
    <property type="evidence" value="ECO:0007669"/>
    <property type="project" value="UniProtKB-UniRule"/>
</dbReference>
<dbReference type="GO" id="GO:0070475">
    <property type="term" value="P:rRNA base methylation"/>
    <property type="evidence" value="ECO:0007669"/>
    <property type="project" value="UniProtKB-UniRule"/>
</dbReference>
<dbReference type="FunFam" id="1.10.150.170:FF:000001">
    <property type="entry name" value="Ribosomal RNA small subunit methyltransferase H"/>
    <property type="match status" value="1"/>
</dbReference>
<dbReference type="Gene3D" id="1.10.150.170">
    <property type="entry name" value="Putative methyltransferase TM0872, insert domain"/>
    <property type="match status" value="1"/>
</dbReference>
<dbReference type="Gene3D" id="3.40.50.150">
    <property type="entry name" value="Vaccinia Virus protein VP39"/>
    <property type="match status" value="1"/>
</dbReference>
<dbReference type="HAMAP" id="MF_01007">
    <property type="entry name" value="16SrRNA_methyltr_H"/>
    <property type="match status" value="1"/>
</dbReference>
<dbReference type="InterPro" id="IPR002903">
    <property type="entry name" value="RsmH"/>
</dbReference>
<dbReference type="InterPro" id="IPR023397">
    <property type="entry name" value="SAM-dep_MeTrfase_MraW_recog"/>
</dbReference>
<dbReference type="InterPro" id="IPR029063">
    <property type="entry name" value="SAM-dependent_MTases_sf"/>
</dbReference>
<dbReference type="NCBIfam" id="TIGR00006">
    <property type="entry name" value="16S rRNA (cytosine(1402)-N(4))-methyltransferase RsmH"/>
    <property type="match status" value="1"/>
</dbReference>
<dbReference type="PANTHER" id="PTHR11265:SF0">
    <property type="entry name" value="12S RRNA N4-METHYLCYTIDINE METHYLTRANSFERASE"/>
    <property type="match status" value="1"/>
</dbReference>
<dbReference type="PANTHER" id="PTHR11265">
    <property type="entry name" value="S-ADENOSYL-METHYLTRANSFERASE MRAW"/>
    <property type="match status" value="1"/>
</dbReference>
<dbReference type="Pfam" id="PF01795">
    <property type="entry name" value="Methyltransf_5"/>
    <property type="match status" value="1"/>
</dbReference>
<dbReference type="PIRSF" id="PIRSF004486">
    <property type="entry name" value="MraW"/>
    <property type="match status" value="1"/>
</dbReference>
<dbReference type="SUPFAM" id="SSF81799">
    <property type="entry name" value="Putative methyltransferase TM0872, insert domain"/>
    <property type="match status" value="1"/>
</dbReference>
<dbReference type="SUPFAM" id="SSF53335">
    <property type="entry name" value="S-adenosyl-L-methionine-dependent methyltransferases"/>
    <property type="match status" value="1"/>
</dbReference>
<evidence type="ECO:0000255" key="1">
    <source>
        <dbReference type="HAMAP-Rule" id="MF_01007"/>
    </source>
</evidence>
<organism>
    <name type="scientific">Haemophilus influenzae (strain PittEE)</name>
    <dbReference type="NCBI Taxonomy" id="374930"/>
    <lineage>
        <taxon>Bacteria</taxon>
        <taxon>Pseudomonadati</taxon>
        <taxon>Pseudomonadota</taxon>
        <taxon>Gammaproteobacteria</taxon>
        <taxon>Pasteurellales</taxon>
        <taxon>Pasteurellaceae</taxon>
        <taxon>Haemophilus</taxon>
    </lineage>
</organism>